<name>NADK_ECO27</name>
<gene>
    <name evidence="1" type="primary">nadK</name>
    <name type="ordered locus">E2348C_2903</name>
</gene>
<sequence length="292" mass="32581">MNNHFKCIGIVGHPRHPTALTTHEMLYRWLCTKGYEVIVEQQIAHELQLKNVKTGTLAEIGQQADLAVVVGGDGNMLGAARTLARYDIKVIGINRGNLGFLTDLDPDNAQQQLADVLEGHYISEKRFLLEAQVCQQDCQKRISTAINEVVLHPGKVAHMIEFEVYIDEIFAFSQRSDGLIISTPTGSTAYSLSAGGPILTPSLDAITLVPMFPHTLSARPLVINSSSTIRLRFSHRRNDLEISCDSQIALPIQEGEDVLIRRCDYHLNLIHPKDYSYFNTLSTKLGWSKKLF</sequence>
<dbReference type="EC" id="2.7.1.23" evidence="1"/>
<dbReference type="EMBL" id="FM180568">
    <property type="protein sequence ID" value="CAS10451.1"/>
    <property type="molecule type" value="Genomic_DNA"/>
</dbReference>
<dbReference type="RefSeq" id="WP_001059176.1">
    <property type="nucleotide sequence ID" value="NC_011601.1"/>
</dbReference>
<dbReference type="SMR" id="B7UH63"/>
<dbReference type="KEGG" id="ecg:E2348C_2903"/>
<dbReference type="HOGENOM" id="CLU_008831_0_1_6"/>
<dbReference type="Proteomes" id="UP000008205">
    <property type="component" value="Chromosome"/>
</dbReference>
<dbReference type="GO" id="GO:0005737">
    <property type="term" value="C:cytoplasm"/>
    <property type="evidence" value="ECO:0007669"/>
    <property type="project" value="UniProtKB-SubCell"/>
</dbReference>
<dbReference type="GO" id="GO:0005524">
    <property type="term" value="F:ATP binding"/>
    <property type="evidence" value="ECO:0007669"/>
    <property type="project" value="UniProtKB-KW"/>
</dbReference>
<dbReference type="GO" id="GO:0046872">
    <property type="term" value="F:metal ion binding"/>
    <property type="evidence" value="ECO:0007669"/>
    <property type="project" value="UniProtKB-UniRule"/>
</dbReference>
<dbReference type="GO" id="GO:0051287">
    <property type="term" value="F:NAD binding"/>
    <property type="evidence" value="ECO:0007669"/>
    <property type="project" value="UniProtKB-ARBA"/>
</dbReference>
<dbReference type="GO" id="GO:0003951">
    <property type="term" value="F:NAD+ kinase activity"/>
    <property type="evidence" value="ECO:0007669"/>
    <property type="project" value="UniProtKB-UniRule"/>
</dbReference>
<dbReference type="GO" id="GO:0019674">
    <property type="term" value="P:NAD metabolic process"/>
    <property type="evidence" value="ECO:0007669"/>
    <property type="project" value="InterPro"/>
</dbReference>
<dbReference type="GO" id="GO:0006741">
    <property type="term" value="P:NADP biosynthetic process"/>
    <property type="evidence" value="ECO:0007669"/>
    <property type="project" value="UniProtKB-UniRule"/>
</dbReference>
<dbReference type="FunFam" id="2.60.200.30:FF:000001">
    <property type="entry name" value="NAD kinase"/>
    <property type="match status" value="1"/>
</dbReference>
<dbReference type="FunFam" id="3.40.50.10330:FF:000004">
    <property type="entry name" value="NAD kinase"/>
    <property type="match status" value="1"/>
</dbReference>
<dbReference type="Gene3D" id="3.40.50.10330">
    <property type="entry name" value="Probable inorganic polyphosphate/atp-NAD kinase, domain 1"/>
    <property type="match status" value="1"/>
</dbReference>
<dbReference type="Gene3D" id="2.60.200.30">
    <property type="entry name" value="Probable inorganic polyphosphate/atp-NAD kinase, domain 2"/>
    <property type="match status" value="1"/>
</dbReference>
<dbReference type="HAMAP" id="MF_00361">
    <property type="entry name" value="NAD_kinase"/>
    <property type="match status" value="1"/>
</dbReference>
<dbReference type="InterPro" id="IPR017438">
    <property type="entry name" value="ATP-NAD_kinase_N"/>
</dbReference>
<dbReference type="InterPro" id="IPR017437">
    <property type="entry name" value="ATP-NAD_kinase_PpnK-typ_C"/>
</dbReference>
<dbReference type="InterPro" id="IPR016064">
    <property type="entry name" value="NAD/diacylglycerol_kinase_sf"/>
</dbReference>
<dbReference type="InterPro" id="IPR002504">
    <property type="entry name" value="NADK"/>
</dbReference>
<dbReference type="NCBIfam" id="NF002306">
    <property type="entry name" value="PRK01231.1"/>
    <property type="match status" value="1"/>
</dbReference>
<dbReference type="NCBIfam" id="NF002893">
    <property type="entry name" value="PRK03378.1"/>
    <property type="match status" value="1"/>
</dbReference>
<dbReference type="PANTHER" id="PTHR20275">
    <property type="entry name" value="NAD KINASE"/>
    <property type="match status" value="1"/>
</dbReference>
<dbReference type="PANTHER" id="PTHR20275:SF0">
    <property type="entry name" value="NAD KINASE"/>
    <property type="match status" value="1"/>
</dbReference>
<dbReference type="Pfam" id="PF01513">
    <property type="entry name" value="NAD_kinase"/>
    <property type="match status" value="1"/>
</dbReference>
<dbReference type="Pfam" id="PF20143">
    <property type="entry name" value="NAD_kinase_C"/>
    <property type="match status" value="1"/>
</dbReference>
<dbReference type="SUPFAM" id="SSF111331">
    <property type="entry name" value="NAD kinase/diacylglycerol kinase-like"/>
    <property type="match status" value="1"/>
</dbReference>
<proteinExistence type="inferred from homology"/>
<feature type="chain" id="PRO_1000133570" description="NAD kinase">
    <location>
        <begin position="1"/>
        <end position="292"/>
    </location>
</feature>
<feature type="active site" description="Proton acceptor" evidence="1">
    <location>
        <position position="73"/>
    </location>
</feature>
<feature type="binding site" evidence="1">
    <location>
        <begin position="73"/>
        <end position="74"/>
    </location>
    <ligand>
        <name>NAD(+)</name>
        <dbReference type="ChEBI" id="CHEBI:57540"/>
    </ligand>
</feature>
<feature type="binding site" evidence="1">
    <location>
        <begin position="147"/>
        <end position="148"/>
    </location>
    <ligand>
        <name>NAD(+)</name>
        <dbReference type="ChEBI" id="CHEBI:57540"/>
    </ligand>
</feature>
<feature type="binding site" evidence="1">
    <location>
        <position position="158"/>
    </location>
    <ligand>
        <name>NAD(+)</name>
        <dbReference type="ChEBI" id="CHEBI:57540"/>
    </ligand>
</feature>
<feature type="binding site" evidence="1">
    <location>
        <position position="175"/>
    </location>
    <ligand>
        <name>NAD(+)</name>
        <dbReference type="ChEBI" id="CHEBI:57540"/>
    </ligand>
</feature>
<feature type="binding site" evidence="1">
    <location>
        <position position="177"/>
    </location>
    <ligand>
        <name>NAD(+)</name>
        <dbReference type="ChEBI" id="CHEBI:57540"/>
    </ligand>
</feature>
<feature type="binding site" evidence="1">
    <location>
        <begin position="188"/>
        <end position="193"/>
    </location>
    <ligand>
        <name>NAD(+)</name>
        <dbReference type="ChEBI" id="CHEBI:57540"/>
    </ligand>
</feature>
<feature type="binding site" evidence="1">
    <location>
        <position position="247"/>
    </location>
    <ligand>
        <name>NAD(+)</name>
        <dbReference type="ChEBI" id="CHEBI:57540"/>
    </ligand>
</feature>
<organism>
    <name type="scientific">Escherichia coli O127:H6 (strain E2348/69 / EPEC)</name>
    <dbReference type="NCBI Taxonomy" id="574521"/>
    <lineage>
        <taxon>Bacteria</taxon>
        <taxon>Pseudomonadati</taxon>
        <taxon>Pseudomonadota</taxon>
        <taxon>Gammaproteobacteria</taxon>
        <taxon>Enterobacterales</taxon>
        <taxon>Enterobacteriaceae</taxon>
        <taxon>Escherichia</taxon>
    </lineage>
</organism>
<accession>B7UH63</accession>
<reference key="1">
    <citation type="journal article" date="2009" name="J. Bacteriol.">
        <title>Complete genome sequence and comparative genome analysis of enteropathogenic Escherichia coli O127:H6 strain E2348/69.</title>
        <authorList>
            <person name="Iguchi A."/>
            <person name="Thomson N.R."/>
            <person name="Ogura Y."/>
            <person name="Saunders D."/>
            <person name="Ooka T."/>
            <person name="Henderson I.R."/>
            <person name="Harris D."/>
            <person name="Asadulghani M."/>
            <person name="Kurokawa K."/>
            <person name="Dean P."/>
            <person name="Kenny B."/>
            <person name="Quail M.A."/>
            <person name="Thurston S."/>
            <person name="Dougan G."/>
            <person name="Hayashi T."/>
            <person name="Parkhill J."/>
            <person name="Frankel G."/>
        </authorList>
    </citation>
    <scope>NUCLEOTIDE SEQUENCE [LARGE SCALE GENOMIC DNA]</scope>
    <source>
        <strain>E2348/69 / EPEC</strain>
    </source>
</reference>
<protein>
    <recommendedName>
        <fullName evidence="1">NAD kinase</fullName>
        <ecNumber evidence="1">2.7.1.23</ecNumber>
    </recommendedName>
    <alternativeName>
        <fullName evidence="1">ATP-dependent NAD kinase</fullName>
    </alternativeName>
</protein>
<evidence type="ECO:0000255" key="1">
    <source>
        <dbReference type="HAMAP-Rule" id="MF_00361"/>
    </source>
</evidence>
<comment type="function">
    <text evidence="1">Involved in the regulation of the intracellular balance of NAD and NADP, and is a key enzyme in the biosynthesis of NADP. Catalyzes specifically the phosphorylation on 2'-hydroxyl of the adenosine moiety of NAD to yield NADP.</text>
</comment>
<comment type="catalytic activity">
    <reaction evidence="1">
        <text>NAD(+) + ATP = ADP + NADP(+) + H(+)</text>
        <dbReference type="Rhea" id="RHEA:18629"/>
        <dbReference type="ChEBI" id="CHEBI:15378"/>
        <dbReference type="ChEBI" id="CHEBI:30616"/>
        <dbReference type="ChEBI" id="CHEBI:57540"/>
        <dbReference type="ChEBI" id="CHEBI:58349"/>
        <dbReference type="ChEBI" id="CHEBI:456216"/>
        <dbReference type="EC" id="2.7.1.23"/>
    </reaction>
</comment>
<comment type="cofactor">
    <cofactor evidence="1">
        <name>a divalent metal cation</name>
        <dbReference type="ChEBI" id="CHEBI:60240"/>
    </cofactor>
</comment>
<comment type="subcellular location">
    <subcellularLocation>
        <location evidence="1">Cytoplasm</location>
    </subcellularLocation>
</comment>
<comment type="similarity">
    <text evidence="1">Belongs to the NAD kinase family.</text>
</comment>
<keyword id="KW-0067">ATP-binding</keyword>
<keyword id="KW-0963">Cytoplasm</keyword>
<keyword id="KW-0418">Kinase</keyword>
<keyword id="KW-0520">NAD</keyword>
<keyword id="KW-0521">NADP</keyword>
<keyword id="KW-0547">Nucleotide-binding</keyword>
<keyword id="KW-1185">Reference proteome</keyword>
<keyword id="KW-0808">Transferase</keyword>